<name>UREF_JANMA</name>
<accession>A6SZ09</accession>
<gene>
    <name evidence="1" type="primary">ureF</name>
    <name type="ordered locus">mma_1816</name>
</gene>
<dbReference type="EMBL" id="CP000269">
    <property type="protein sequence ID" value="ABR90010.1"/>
    <property type="molecule type" value="Genomic_DNA"/>
</dbReference>
<dbReference type="RefSeq" id="WP_012079669.1">
    <property type="nucleotide sequence ID" value="NC_009659.1"/>
</dbReference>
<dbReference type="SMR" id="A6SZ09"/>
<dbReference type="STRING" id="375286.mma_1816"/>
<dbReference type="KEGG" id="mms:mma_1816"/>
<dbReference type="eggNOG" id="COG0830">
    <property type="taxonomic scope" value="Bacteria"/>
</dbReference>
<dbReference type="HOGENOM" id="CLU_049215_2_1_4"/>
<dbReference type="OrthoDB" id="9798772at2"/>
<dbReference type="Proteomes" id="UP000006388">
    <property type="component" value="Chromosome"/>
</dbReference>
<dbReference type="GO" id="GO:0005737">
    <property type="term" value="C:cytoplasm"/>
    <property type="evidence" value="ECO:0007669"/>
    <property type="project" value="UniProtKB-SubCell"/>
</dbReference>
<dbReference type="GO" id="GO:0016151">
    <property type="term" value="F:nickel cation binding"/>
    <property type="evidence" value="ECO:0007669"/>
    <property type="project" value="UniProtKB-UniRule"/>
</dbReference>
<dbReference type="Gene3D" id="1.10.4190.10">
    <property type="entry name" value="Urease accessory protein UreF"/>
    <property type="match status" value="1"/>
</dbReference>
<dbReference type="HAMAP" id="MF_01385">
    <property type="entry name" value="UreF"/>
    <property type="match status" value="1"/>
</dbReference>
<dbReference type="InterPro" id="IPR002639">
    <property type="entry name" value="UreF"/>
</dbReference>
<dbReference type="InterPro" id="IPR038277">
    <property type="entry name" value="UreF_sf"/>
</dbReference>
<dbReference type="PANTHER" id="PTHR33620">
    <property type="entry name" value="UREASE ACCESSORY PROTEIN F"/>
    <property type="match status" value="1"/>
</dbReference>
<dbReference type="PANTHER" id="PTHR33620:SF1">
    <property type="entry name" value="UREASE ACCESSORY PROTEIN F"/>
    <property type="match status" value="1"/>
</dbReference>
<dbReference type="Pfam" id="PF01730">
    <property type="entry name" value="UreF"/>
    <property type="match status" value="1"/>
</dbReference>
<dbReference type="PIRSF" id="PIRSF009467">
    <property type="entry name" value="Ureas_acces_UreF"/>
    <property type="match status" value="1"/>
</dbReference>
<keyword id="KW-0143">Chaperone</keyword>
<keyword id="KW-0963">Cytoplasm</keyword>
<keyword id="KW-0996">Nickel insertion</keyword>
<comment type="function">
    <text evidence="1">Required for maturation of urease via the functional incorporation of the urease nickel metallocenter.</text>
</comment>
<comment type="subunit">
    <text evidence="1">UreD, UreF and UreG form a complex that acts as a GTP-hydrolysis-dependent molecular chaperone, activating the urease apoprotein by helping to assemble the nickel containing metallocenter of UreC. The UreE protein probably delivers the nickel.</text>
</comment>
<comment type="subcellular location">
    <subcellularLocation>
        <location evidence="1">Cytoplasm</location>
    </subcellularLocation>
</comment>
<comment type="similarity">
    <text evidence="1">Belongs to the UreF family.</text>
</comment>
<evidence type="ECO:0000255" key="1">
    <source>
        <dbReference type="HAMAP-Rule" id="MF_01385"/>
    </source>
</evidence>
<proteinExistence type="inferred from homology"/>
<organism>
    <name type="scientific">Janthinobacterium sp. (strain Marseille)</name>
    <name type="common">Minibacterium massiliensis</name>
    <dbReference type="NCBI Taxonomy" id="375286"/>
    <lineage>
        <taxon>Bacteria</taxon>
        <taxon>Pseudomonadati</taxon>
        <taxon>Pseudomonadota</taxon>
        <taxon>Betaproteobacteria</taxon>
        <taxon>Burkholderiales</taxon>
        <taxon>Oxalobacteraceae</taxon>
        <taxon>Janthinobacterium</taxon>
    </lineage>
</organism>
<sequence length="226" mass="24791">MQAQALLHLLQLSSPSLPIGAYSYSQGLEAAIENGTVKDEVGARRWIIDVLHEVVARFEAPVLWRLLQAFETRDAAAVESWTERFIAARDTAEFRAETIQMGYSLGKLCSDLQLGDAEMLALLQAQTEVPLPTALAYAAVTLKVPAEAALLGMLFSWAENQVLVCVKSVPLGQVAGQRLLLSLQAELEVAAQVAQQLPDEELSNWSPGLSLLSMQHEVQYSRLYRS</sequence>
<protein>
    <recommendedName>
        <fullName evidence="1">Urease accessory protein UreF</fullName>
    </recommendedName>
</protein>
<feature type="chain" id="PRO_0000344127" description="Urease accessory protein UreF">
    <location>
        <begin position="1"/>
        <end position="226"/>
    </location>
</feature>
<reference key="1">
    <citation type="journal article" date="2007" name="PLoS Genet.">
        <title>Genome analysis of Minibacterium massiliensis highlights the convergent evolution of water-living bacteria.</title>
        <authorList>
            <person name="Audic S."/>
            <person name="Robert C."/>
            <person name="Campagna B."/>
            <person name="Parinello H."/>
            <person name="Claverie J.-M."/>
            <person name="Raoult D."/>
            <person name="Drancourt M."/>
        </authorList>
    </citation>
    <scope>NUCLEOTIDE SEQUENCE [LARGE SCALE GENOMIC DNA]</scope>
    <source>
        <strain>Marseille</strain>
    </source>
</reference>